<gene>
    <name type="ordered locus">YPO2857</name>
    <name type="ordered locus">y1376</name>
    <name type="ordered locus">YP_2723</name>
</gene>
<reference key="1">
    <citation type="journal article" date="2001" name="Nature">
        <title>Genome sequence of Yersinia pestis, the causative agent of plague.</title>
        <authorList>
            <person name="Parkhill J."/>
            <person name="Wren B.W."/>
            <person name="Thomson N.R."/>
            <person name="Titball R.W."/>
            <person name="Holden M.T.G."/>
            <person name="Prentice M.B."/>
            <person name="Sebaihia M."/>
            <person name="James K.D."/>
            <person name="Churcher C.M."/>
            <person name="Mungall K.L."/>
            <person name="Baker S."/>
            <person name="Basham D."/>
            <person name="Bentley S.D."/>
            <person name="Brooks K."/>
            <person name="Cerdeno-Tarraga A.-M."/>
            <person name="Chillingworth T."/>
            <person name="Cronin A."/>
            <person name="Davies R.M."/>
            <person name="Davis P."/>
            <person name="Dougan G."/>
            <person name="Feltwell T."/>
            <person name="Hamlin N."/>
            <person name="Holroyd S."/>
            <person name="Jagels K."/>
            <person name="Karlyshev A.V."/>
            <person name="Leather S."/>
            <person name="Moule S."/>
            <person name="Oyston P.C.F."/>
            <person name="Quail M.A."/>
            <person name="Rutherford K.M."/>
            <person name="Simmonds M."/>
            <person name="Skelton J."/>
            <person name="Stevens K."/>
            <person name="Whitehead S."/>
            <person name="Barrell B.G."/>
        </authorList>
    </citation>
    <scope>NUCLEOTIDE SEQUENCE [LARGE SCALE GENOMIC DNA]</scope>
    <source>
        <strain>CO-92 / Biovar Orientalis</strain>
    </source>
</reference>
<reference key="2">
    <citation type="journal article" date="2002" name="J. Bacteriol.">
        <title>Genome sequence of Yersinia pestis KIM.</title>
        <authorList>
            <person name="Deng W."/>
            <person name="Burland V."/>
            <person name="Plunkett G. III"/>
            <person name="Boutin A."/>
            <person name="Mayhew G.F."/>
            <person name="Liss P."/>
            <person name="Perna N.T."/>
            <person name="Rose D.J."/>
            <person name="Mau B."/>
            <person name="Zhou S."/>
            <person name="Schwartz D.C."/>
            <person name="Fetherston J.D."/>
            <person name="Lindler L.E."/>
            <person name="Brubaker R.R."/>
            <person name="Plano G.V."/>
            <person name="Straley S.C."/>
            <person name="McDonough K.A."/>
            <person name="Nilles M.L."/>
            <person name="Matson J.S."/>
            <person name="Blattner F.R."/>
            <person name="Perry R.D."/>
        </authorList>
    </citation>
    <scope>NUCLEOTIDE SEQUENCE [LARGE SCALE GENOMIC DNA]</scope>
    <source>
        <strain>KIM10+ / Biovar Mediaevalis</strain>
    </source>
</reference>
<reference key="3">
    <citation type="journal article" date="2004" name="DNA Res.">
        <title>Complete genome sequence of Yersinia pestis strain 91001, an isolate avirulent to humans.</title>
        <authorList>
            <person name="Song Y."/>
            <person name="Tong Z."/>
            <person name="Wang J."/>
            <person name="Wang L."/>
            <person name="Guo Z."/>
            <person name="Han Y."/>
            <person name="Zhang J."/>
            <person name="Pei D."/>
            <person name="Zhou D."/>
            <person name="Qin H."/>
            <person name="Pang X."/>
            <person name="Han Y."/>
            <person name="Zhai J."/>
            <person name="Li M."/>
            <person name="Cui B."/>
            <person name="Qi Z."/>
            <person name="Jin L."/>
            <person name="Dai R."/>
            <person name="Chen F."/>
            <person name="Li S."/>
            <person name="Ye C."/>
            <person name="Du Z."/>
            <person name="Lin W."/>
            <person name="Wang J."/>
            <person name="Yu J."/>
            <person name="Yang H."/>
            <person name="Wang J."/>
            <person name="Huang P."/>
            <person name="Yang R."/>
        </authorList>
    </citation>
    <scope>NUCLEOTIDE SEQUENCE [LARGE SCALE GENOMIC DNA]</scope>
    <source>
        <strain>91001 / Biovar Mediaevalis</strain>
    </source>
</reference>
<feature type="signal peptide" evidence="1">
    <location>
        <begin position="1"/>
        <end position="21"/>
    </location>
</feature>
<feature type="chain" id="PRO_0000016549" description="Uncharacterized protein YPO2857/y1376/YP_2723">
    <location>
        <begin position="22"/>
        <end position="154"/>
    </location>
</feature>
<evidence type="ECO:0000255" key="1"/>
<evidence type="ECO:0000305" key="2"/>
<organism>
    <name type="scientific">Yersinia pestis</name>
    <dbReference type="NCBI Taxonomy" id="632"/>
    <lineage>
        <taxon>Bacteria</taxon>
        <taxon>Pseudomonadati</taxon>
        <taxon>Pseudomonadota</taxon>
        <taxon>Gammaproteobacteria</taxon>
        <taxon>Enterobacterales</taxon>
        <taxon>Yersiniaceae</taxon>
        <taxon>Yersinia</taxon>
    </lineage>
</organism>
<proteinExistence type="inferred from homology"/>
<dbReference type="EMBL" id="AL590842">
    <property type="protein sequence ID" value="CAL21468.1"/>
    <property type="molecule type" value="Genomic_DNA"/>
</dbReference>
<dbReference type="EMBL" id="AE009952">
    <property type="protein sequence ID" value="AAM84949.1"/>
    <property type="status" value="ALT_INIT"/>
    <property type="molecule type" value="Genomic_DNA"/>
</dbReference>
<dbReference type="EMBL" id="AE017042">
    <property type="protein sequence ID" value="AAS62912.1"/>
    <property type="status" value="ALT_INIT"/>
    <property type="molecule type" value="Genomic_DNA"/>
</dbReference>
<dbReference type="PIR" id="AI0347">
    <property type="entry name" value="AI0347"/>
</dbReference>
<dbReference type="RefSeq" id="YP_002347793.1">
    <property type="nucleotide sequence ID" value="NC_003143.1"/>
</dbReference>
<dbReference type="SMR" id="P58483"/>
<dbReference type="STRING" id="214092.YPO2857"/>
<dbReference type="PaxDb" id="214092-YPO2857"/>
<dbReference type="DNASU" id="1146323"/>
<dbReference type="EnsemblBacteria" id="AAS62912">
    <property type="protein sequence ID" value="AAS62912"/>
    <property type="gene ID" value="YP_2723"/>
</dbReference>
<dbReference type="KEGG" id="ype:YPO2857"/>
<dbReference type="KEGG" id="ypk:y1376"/>
<dbReference type="KEGG" id="ypm:YP_2723"/>
<dbReference type="PATRIC" id="fig|214092.21.peg.3301"/>
<dbReference type="eggNOG" id="ENOG5032SX0">
    <property type="taxonomic scope" value="Bacteria"/>
</dbReference>
<dbReference type="HOGENOM" id="CLU_109262_1_0_6"/>
<dbReference type="OrthoDB" id="8858386at2"/>
<dbReference type="Proteomes" id="UP000000815">
    <property type="component" value="Chromosome"/>
</dbReference>
<dbReference type="Proteomes" id="UP000001019">
    <property type="component" value="Chromosome"/>
</dbReference>
<dbReference type="Proteomes" id="UP000002490">
    <property type="component" value="Chromosome"/>
</dbReference>
<dbReference type="GO" id="GO:0042597">
    <property type="term" value="C:periplasmic space"/>
    <property type="evidence" value="ECO:0007669"/>
    <property type="project" value="UniProtKB-SubCell"/>
</dbReference>
<dbReference type="Gene3D" id="3.40.1420.10">
    <property type="entry name" value="Inhibitor of vertebrate lysozyme"/>
    <property type="match status" value="1"/>
</dbReference>
<dbReference type="InterPro" id="IPR036501">
    <property type="entry name" value="Inhibitor_vert_lysozyme_sf"/>
</dbReference>
<dbReference type="InterPro" id="IPR014453">
    <property type="entry name" value="Inhibitor_vertebrate_lysozyme"/>
</dbReference>
<dbReference type="Pfam" id="PF08816">
    <property type="entry name" value="Ivy"/>
    <property type="match status" value="1"/>
</dbReference>
<dbReference type="PIRSF" id="PIRSF009103">
    <property type="entry name" value="Ivy"/>
    <property type="match status" value="1"/>
</dbReference>
<dbReference type="SUPFAM" id="SSF89872">
    <property type="entry name" value="Inhibitor of vertebrate lysozyme, Ivy"/>
    <property type="match status" value="1"/>
</dbReference>
<keyword id="KW-0574">Periplasm</keyword>
<keyword id="KW-1185">Reference proteome</keyword>
<keyword id="KW-0732">Signal</keyword>
<comment type="subcellular location">
    <subcellularLocation>
        <location evidence="2">Periplasm</location>
    </subcellularLocation>
</comment>
<comment type="similarity">
    <text evidence="2">Belongs to the ivy family.</text>
</comment>
<comment type="sequence caution" evidence="2">
    <conflict type="erroneous initiation">
        <sequence resource="EMBL-CDS" id="AAM84949"/>
    </conflict>
</comment>
<comment type="sequence caution" evidence="2">
    <conflict type="erroneous initiation">
        <sequence resource="EMBL-CDS" id="AAS62912"/>
    </conflict>
</comment>
<protein>
    <recommendedName>
        <fullName>Uncharacterized protein YPO2857/y1376/YP_2723</fullName>
    </recommendedName>
</protein>
<accession>P58483</accession>
<accession>Q0WD45</accession>
<name>Y2857_YERPE</name>
<sequence length="154" mass="17048">MSISSGSFAQPAAVVSSPGVTVPEPVASTPTMAELLQQPVYKARWQKMVKGQKNLPAWARKGAGTSGPYENITWGAQQYKVGSLCKPHDCSNNFMWVAFSNDKKHVWGLRVTVADKPEALDNPSKFATYQWLGRPNENIQAMLTAQLEKDPNWR</sequence>